<proteinExistence type="inferred from homology"/>
<sequence length="147" mass="17364">MKVISENRKGLYGYKIIEKHEAGISLLGWEVKSARAQTVNLTNSYIFFKKGELFLCNANFAKYMLLKVEEDRDRKLLMHKKEIIRLKNKLDRLSSTTIKPTKIYFNNKSKIKVEIALVQGMNRADKREDLKKRDNEKYMQKVKSNYL</sequence>
<gene>
    <name evidence="1" type="primary">smpB</name>
    <name type="ordered locus">MAG7390</name>
</gene>
<comment type="function">
    <text evidence="1">Required for rescue of stalled ribosomes mediated by trans-translation. Binds to transfer-messenger RNA (tmRNA), required for stable association of tmRNA with ribosomes. tmRNA and SmpB together mimic tRNA shape, replacing the anticodon stem-loop with SmpB. tmRNA is encoded by the ssrA gene; the 2 termini fold to resemble tRNA(Ala) and it encodes a 'tag peptide', a short internal open reading frame. During trans-translation Ala-aminoacylated tmRNA acts like a tRNA, entering the A-site of stalled ribosomes, displacing the stalled mRNA. The ribosome then switches to translate the ORF on the tmRNA; the nascent peptide is terminated with the 'tag peptide' encoded by the tmRNA and targeted for degradation. The ribosome is freed to recommence translation, which seems to be the essential function of trans-translation.</text>
</comment>
<comment type="subcellular location">
    <subcellularLocation>
        <location evidence="1">Cytoplasm</location>
    </subcellularLocation>
    <text evidence="1">The tmRNA-SmpB complex associates with stalled 70S ribosomes.</text>
</comment>
<comment type="similarity">
    <text evidence="1">Belongs to the SmpB family.</text>
</comment>
<evidence type="ECO:0000255" key="1">
    <source>
        <dbReference type="HAMAP-Rule" id="MF_00023"/>
    </source>
</evidence>
<protein>
    <recommendedName>
        <fullName evidence="1">SsrA-binding protein</fullName>
    </recommendedName>
    <alternativeName>
        <fullName evidence="1">Small protein B</fullName>
    </alternativeName>
</protein>
<keyword id="KW-0963">Cytoplasm</keyword>
<keyword id="KW-1185">Reference proteome</keyword>
<keyword id="KW-0694">RNA-binding</keyword>
<feature type="chain" id="PRO_1000090167" description="SsrA-binding protein">
    <location>
        <begin position="1"/>
        <end position="147"/>
    </location>
</feature>
<reference key="1">
    <citation type="journal article" date="2007" name="PLoS Genet.">
        <title>Being pathogenic, plastic, and sexual while living with a nearly minimal bacterial genome.</title>
        <authorList>
            <person name="Sirand-Pugnet P."/>
            <person name="Lartigue C."/>
            <person name="Marenda M."/>
            <person name="Jacob D."/>
            <person name="Barre A."/>
            <person name="Barbe V."/>
            <person name="Schenowitz C."/>
            <person name="Mangenot S."/>
            <person name="Couloux A."/>
            <person name="Segurens B."/>
            <person name="de Daruvar A."/>
            <person name="Blanchard A."/>
            <person name="Citti C."/>
        </authorList>
    </citation>
    <scope>NUCLEOTIDE SEQUENCE [LARGE SCALE GENOMIC DNA]</scope>
    <source>
        <strain>NCTC 10123 / CIP 59.7 / PG2</strain>
    </source>
</reference>
<accession>A5IZI0</accession>
<dbReference type="EMBL" id="CU179680">
    <property type="protein sequence ID" value="CAL59439.1"/>
    <property type="molecule type" value="Genomic_DNA"/>
</dbReference>
<dbReference type="RefSeq" id="WP_011949891.1">
    <property type="nucleotide sequence ID" value="NC_009497.1"/>
</dbReference>
<dbReference type="SMR" id="A5IZI0"/>
<dbReference type="STRING" id="347257.MAG7390"/>
<dbReference type="GeneID" id="93358466"/>
<dbReference type="KEGG" id="maa:MAG7390"/>
<dbReference type="HOGENOM" id="CLU_108953_3_1_14"/>
<dbReference type="Proteomes" id="UP000007065">
    <property type="component" value="Chromosome"/>
</dbReference>
<dbReference type="GO" id="GO:0005829">
    <property type="term" value="C:cytosol"/>
    <property type="evidence" value="ECO:0007669"/>
    <property type="project" value="TreeGrafter"/>
</dbReference>
<dbReference type="GO" id="GO:0003723">
    <property type="term" value="F:RNA binding"/>
    <property type="evidence" value="ECO:0007669"/>
    <property type="project" value="UniProtKB-UniRule"/>
</dbReference>
<dbReference type="GO" id="GO:0070929">
    <property type="term" value="P:trans-translation"/>
    <property type="evidence" value="ECO:0007669"/>
    <property type="project" value="UniProtKB-UniRule"/>
</dbReference>
<dbReference type="CDD" id="cd09294">
    <property type="entry name" value="SmpB"/>
    <property type="match status" value="1"/>
</dbReference>
<dbReference type="Gene3D" id="2.40.280.10">
    <property type="match status" value="1"/>
</dbReference>
<dbReference type="HAMAP" id="MF_00023">
    <property type="entry name" value="SmpB"/>
    <property type="match status" value="1"/>
</dbReference>
<dbReference type="InterPro" id="IPR023620">
    <property type="entry name" value="SmpB"/>
</dbReference>
<dbReference type="InterPro" id="IPR000037">
    <property type="entry name" value="SsrA-bd_prot"/>
</dbReference>
<dbReference type="InterPro" id="IPR020081">
    <property type="entry name" value="SsrA-bd_prot_CS"/>
</dbReference>
<dbReference type="NCBIfam" id="NF003843">
    <property type="entry name" value="PRK05422.1"/>
    <property type="match status" value="1"/>
</dbReference>
<dbReference type="NCBIfam" id="TIGR00086">
    <property type="entry name" value="smpB"/>
    <property type="match status" value="1"/>
</dbReference>
<dbReference type="PANTHER" id="PTHR30308:SF2">
    <property type="entry name" value="SSRA-BINDING PROTEIN"/>
    <property type="match status" value="1"/>
</dbReference>
<dbReference type="PANTHER" id="PTHR30308">
    <property type="entry name" value="TMRNA-BINDING COMPONENT OF TRANS-TRANSLATION TAGGING COMPLEX"/>
    <property type="match status" value="1"/>
</dbReference>
<dbReference type="Pfam" id="PF01668">
    <property type="entry name" value="SmpB"/>
    <property type="match status" value="1"/>
</dbReference>
<dbReference type="SUPFAM" id="SSF74982">
    <property type="entry name" value="Small protein B (SmpB)"/>
    <property type="match status" value="1"/>
</dbReference>
<dbReference type="PROSITE" id="PS01317">
    <property type="entry name" value="SSRP"/>
    <property type="match status" value="1"/>
</dbReference>
<organism>
    <name type="scientific">Mycoplasmopsis agalactiae (strain NCTC 10123 / CIP 59.7 / PG2)</name>
    <name type="common">Mycoplasma agalactiae</name>
    <dbReference type="NCBI Taxonomy" id="347257"/>
    <lineage>
        <taxon>Bacteria</taxon>
        <taxon>Bacillati</taxon>
        <taxon>Mycoplasmatota</taxon>
        <taxon>Mycoplasmoidales</taxon>
        <taxon>Metamycoplasmataceae</taxon>
        <taxon>Mycoplasmopsis</taxon>
    </lineage>
</organism>
<name>SSRP_MYCAP</name>